<dbReference type="EC" id="2.7.7.87" evidence="1"/>
<dbReference type="EMBL" id="CP000926">
    <property type="protein sequence ID" value="ABY96002.1"/>
    <property type="molecule type" value="Genomic_DNA"/>
</dbReference>
<dbReference type="RefSeq" id="WP_012269878.1">
    <property type="nucleotide sequence ID" value="NC_010322.1"/>
</dbReference>
<dbReference type="SMR" id="B0KF32"/>
<dbReference type="KEGG" id="ppg:PputGB1_0086"/>
<dbReference type="eggNOG" id="COG0009">
    <property type="taxonomic scope" value="Bacteria"/>
</dbReference>
<dbReference type="HOGENOM" id="CLU_031397_6_0_6"/>
<dbReference type="Proteomes" id="UP000002157">
    <property type="component" value="Chromosome"/>
</dbReference>
<dbReference type="GO" id="GO:0005737">
    <property type="term" value="C:cytoplasm"/>
    <property type="evidence" value="ECO:0007669"/>
    <property type="project" value="UniProtKB-SubCell"/>
</dbReference>
<dbReference type="GO" id="GO:0005524">
    <property type="term" value="F:ATP binding"/>
    <property type="evidence" value="ECO:0007669"/>
    <property type="project" value="UniProtKB-UniRule"/>
</dbReference>
<dbReference type="GO" id="GO:0003725">
    <property type="term" value="F:double-stranded RNA binding"/>
    <property type="evidence" value="ECO:0007669"/>
    <property type="project" value="InterPro"/>
</dbReference>
<dbReference type="GO" id="GO:0061710">
    <property type="term" value="F:L-threonylcarbamoyladenylate synthase"/>
    <property type="evidence" value="ECO:0007669"/>
    <property type="project" value="UniProtKB-EC"/>
</dbReference>
<dbReference type="GO" id="GO:0000049">
    <property type="term" value="F:tRNA binding"/>
    <property type="evidence" value="ECO:0007669"/>
    <property type="project" value="TreeGrafter"/>
</dbReference>
<dbReference type="GO" id="GO:0006450">
    <property type="term" value="P:regulation of translational fidelity"/>
    <property type="evidence" value="ECO:0007669"/>
    <property type="project" value="TreeGrafter"/>
</dbReference>
<dbReference type="GO" id="GO:0002949">
    <property type="term" value="P:tRNA threonylcarbamoyladenosine modification"/>
    <property type="evidence" value="ECO:0007669"/>
    <property type="project" value="UniProtKB-UniRule"/>
</dbReference>
<dbReference type="FunFam" id="3.90.870.10:FF:000004">
    <property type="entry name" value="Threonylcarbamoyl-AMP synthase"/>
    <property type="match status" value="1"/>
</dbReference>
<dbReference type="Gene3D" id="3.90.870.10">
    <property type="entry name" value="DHBP synthase"/>
    <property type="match status" value="1"/>
</dbReference>
<dbReference type="HAMAP" id="MF_01852">
    <property type="entry name" value="TsaC"/>
    <property type="match status" value="1"/>
</dbReference>
<dbReference type="InterPro" id="IPR017945">
    <property type="entry name" value="DHBP_synth_RibB-like_a/b_dom"/>
</dbReference>
<dbReference type="InterPro" id="IPR006070">
    <property type="entry name" value="Sua5-like_dom"/>
</dbReference>
<dbReference type="InterPro" id="IPR023535">
    <property type="entry name" value="TC-AMP_synthase"/>
</dbReference>
<dbReference type="InterPro" id="IPR050156">
    <property type="entry name" value="TC-AMP_synthase_SUA5"/>
</dbReference>
<dbReference type="PANTHER" id="PTHR17490">
    <property type="entry name" value="SUA5"/>
    <property type="match status" value="1"/>
</dbReference>
<dbReference type="PANTHER" id="PTHR17490:SF18">
    <property type="entry name" value="THREONYLCARBAMOYL-AMP SYNTHASE"/>
    <property type="match status" value="1"/>
</dbReference>
<dbReference type="Pfam" id="PF01300">
    <property type="entry name" value="Sua5_yciO_yrdC"/>
    <property type="match status" value="1"/>
</dbReference>
<dbReference type="SUPFAM" id="SSF55821">
    <property type="entry name" value="YrdC/RibB"/>
    <property type="match status" value="1"/>
</dbReference>
<dbReference type="PROSITE" id="PS51163">
    <property type="entry name" value="YRDC"/>
    <property type="match status" value="1"/>
</dbReference>
<evidence type="ECO:0000255" key="1">
    <source>
        <dbReference type="HAMAP-Rule" id="MF_01852"/>
    </source>
</evidence>
<sequence>MVSSFRVQQAAREIRAGAVIAYPTEAVWGLGCDPWNEDAVYRLLALKSRPVDKGLILIADNIRQFDFLFEDFPEDWIERMGSTWPGPNTWLVPHQDLLPEWVTGKHDTVALRVTDHPQVRELCALVGPLISTSCNPGGRPAAKTRLRVEQYFHGQLDLVLGGALGGRKNPSVIRNLATGEVVRPG</sequence>
<reference key="1">
    <citation type="submission" date="2008-01" db="EMBL/GenBank/DDBJ databases">
        <title>Complete sequence of Pseudomonas putida GB-1.</title>
        <authorList>
            <consortium name="US DOE Joint Genome Institute"/>
            <person name="Copeland A."/>
            <person name="Lucas S."/>
            <person name="Lapidus A."/>
            <person name="Barry K."/>
            <person name="Glavina del Rio T."/>
            <person name="Dalin E."/>
            <person name="Tice H."/>
            <person name="Pitluck S."/>
            <person name="Bruce D."/>
            <person name="Goodwin L."/>
            <person name="Chertkov O."/>
            <person name="Brettin T."/>
            <person name="Detter J.C."/>
            <person name="Han C."/>
            <person name="Kuske C.R."/>
            <person name="Schmutz J."/>
            <person name="Larimer F."/>
            <person name="Land M."/>
            <person name="Hauser L."/>
            <person name="Kyrpides N."/>
            <person name="Kim E."/>
            <person name="McCarthy J.K."/>
            <person name="Richardson P."/>
        </authorList>
    </citation>
    <scope>NUCLEOTIDE SEQUENCE [LARGE SCALE GENOMIC DNA]</scope>
    <source>
        <strain>GB-1</strain>
    </source>
</reference>
<comment type="function">
    <text evidence="1">Required for the formation of a threonylcarbamoyl group on adenosine at position 37 (t(6)A37) in tRNAs that read codons beginning with adenine. Catalyzes the conversion of L-threonine, HCO(3)(-)/CO(2) and ATP to give threonylcarbamoyl-AMP (TC-AMP) as the acyladenylate intermediate, with the release of diphosphate.</text>
</comment>
<comment type="catalytic activity">
    <reaction evidence="1">
        <text>L-threonine + hydrogencarbonate + ATP = L-threonylcarbamoyladenylate + diphosphate + H2O</text>
        <dbReference type="Rhea" id="RHEA:36407"/>
        <dbReference type="ChEBI" id="CHEBI:15377"/>
        <dbReference type="ChEBI" id="CHEBI:17544"/>
        <dbReference type="ChEBI" id="CHEBI:30616"/>
        <dbReference type="ChEBI" id="CHEBI:33019"/>
        <dbReference type="ChEBI" id="CHEBI:57926"/>
        <dbReference type="ChEBI" id="CHEBI:73682"/>
        <dbReference type="EC" id="2.7.7.87"/>
    </reaction>
</comment>
<comment type="subcellular location">
    <subcellularLocation>
        <location evidence="1">Cytoplasm</location>
    </subcellularLocation>
</comment>
<comment type="similarity">
    <text evidence="1">Belongs to the SUA5 family. TsaC subfamily.</text>
</comment>
<name>TSAC_PSEPG</name>
<protein>
    <recommendedName>
        <fullName evidence="1">Threonylcarbamoyl-AMP synthase</fullName>
        <shortName evidence="1">TC-AMP synthase</shortName>
        <ecNumber evidence="1">2.7.7.87</ecNumber>
    </recommendedName>
    <alternativeName>
        <fullName evidence="1">L-threonylcarbamoyladenylate synthase</fullName>
    </alternativeName>
    <alternativeName>
        <fullName evidence="1">t(6)A37 threonylcarbamoyladenosine biosynthesis protein TsaC</fullName>
    </alternativeName>
    <alternativeName>
        <fullName evidence="1">tRNA threonylcarbamoyladenosine biosynthesis protein TsaC</fullName>
    </alternativeName>
</protein>
<keyword id="KW-0067">ATP-binding</keyword>
<keyword id="KW-0963">Cytoplasm</keyword>
<keyword id="KW-0547">Nucleotide-binding</keyword>
<keyword id="KW-0548">Nucleotidyltransferase</keyword>
<keyword id="KW-0808">Transferase</keyword>
<keyword id="KW-0819">tRNA processing</keyword>
<organism>
    <name type="scientific">Pseudomonas putida (strain GB-1)</name>
    <dbReference type="NCBI Taxonomy" id="76869"/>
    <lineage>
        <taxon>Bacteria</taxon>
        <taxon>Pseudomonadati</taxon>
        <taxon>Pseudomonadota</taxon>
        <taxon>Gammaproteobacteria</taxon>
        <taxon>Pseudomonadales</taxon>
        <taxon>Pseudomonadaceae</taxon>
        <taxon>Pseudomonas</taxon>
    </lineage>
</organism>
<proteinExistence type="inferred from homology"/>
<feature type="chain" id="PRO_0000352956" description="Threonylcarbamoyl-AMP synthase">
    <location>
        <begin position="1"/>
        <end position="185"/>
    </location>
</feature>
<feature type="domain" description="YrdC-like" evidence="1">
    <location>
        <begin position="4"/>
        <end position="185"/>
    </location>
</feature>
<accession>B0KF32</accession>
<gene>
    <name evidence="1" type="primary">tsaC</name>
    <name type="synonym">rimN</name>
    <name type="ordered locus">PputGB1_0086</name>
</gene>